<keyword id="KW-0158">Chromosome</keyword>
<keyword id="KW-0489">Methyltransferase</keyword>
<keyword id="KW-0539">Nucleus</keyword>
<keyword id="KW-1185">Reference proteome</keyword>
<keyword id="KW-0678">Repressor</keyword>
<keyword id="KW-0949">S-adenosyl-L-methionine</keyword>
<keyword id="KW-0804">Transcription</keyword>
<keyword id="KW-0805">Transcription regulation</keyword>
<keyword id="KW-0808">Transferase</keyword>
<organism>
    <name type="scientific">Aspergillus oryzae (strain ATCC 42149 / RIB 40)</name>
    <name type="common">Yellow koji mold</name>
    <dbReference type="NCBI Taxonomy" id="510516"/>
    <lineage>
        <taxon>Eukaryota</taxon>
        <taxon>Fungi</taxon>
        <taxon>Dikarya</taxon>
        <taxon>Ascomycota</taxon>
        <taxon>Pezizomycotina</taxon>
        <taxon>Eurotiomycetes</taxon>
        <taxon>Eurotiomycetidae</taxon>
        <taxon>Eurotiales</taxon>
        <taxon>Aspergillaceae</taxon>
        <taxon>Aspergillus</taxon>
        <taxon>Aspergillus subgen. Circumdati</taxon>
    </lineage>
</organism>
<proteinExistence type="inferred from homology"/>
<reference key="1">
    <citation type="journal article" date="2005" name="Nature">
        <title>Genome sequencing and analysis of Aspergillus oryzae.</title>
        <authorList>
            <person name="Machida M."/>
            <person name="Asai K."/>
            <person name="Sano M."/>
            <person name="Tanaka T."/>
            <person name="Kumagai T."/>
            <person name="Terai G."/>
            <person name="Kusumoto K."/>
            <person name="Arima T."/>
            <person name="Akita O."/>
            <person name="Kashiwagi Y."/>
            <person name="Abe K."/>
            <person name="Gomi K."/>
            <person name="Horiuchi H."/>
            <person name="Kitamoto K."/>
            <person name="Kobayashi T."/>
            <person name="Takeuchi M."/>
            <person name="Denning D.W."/>
            <person name="Galagan J.E."/>
            <person name="Nierman W.C."/>
            <person name="Yu J."/>
            <person name="Archer D.B."/>
            <person name="Bennett J.W."/>
            <person name="Bhatnagar D."/>
            <person name="Cleveland T.E."/>
            <person name="Fedorova N.D."/>
            <person name="Gotoh O."/>
            <person name="Horikawa H."/>
            <person name="Hosoyama A."/>
            <person name="Ichinomiya M."/>
            <person name="Igarashi R."/>
            <person name="Iwashita K."/>
            <person name="Juvvadi P.R."/>
            <person name="Kato M."/>
            <person name="Kato Y."/>
            <person name="Kin T."/>
            <person name="Kokubun A."/>
            <person name="Maeda H."/>
            <person name="Maeyama N."/>
            <person name="Maruyama J."/>
            <person name="Nagasaki H."/>
            <person name="Nakajima T."/>
            <person name="Oda K."/>
            <person name="Okada K."/>
            <person name="Paulsen I."/>
            <person name="Sakamoto K."/>
            <person name="Sawano T."/>
            <person name="Takahashi M."/>
            <person name="Takase K."/>
            <person name="Terabayashi Y."/>
            <person name="Wortman J.R."/>
            <person name="Yamada O."/>
            <person name="Yamagata Y."/>
            <person name="Anazawa H."/>
            <person name="Hata Y."/>
            <person name="Koide Y."/>
            <person name="Komori T."/>
            <person name="Koyama Y."/>
            <person name="Minetoki T."/>
            <person name="Suharnan S."/>
            <person name="Tanaka A."/>
            <person name="Isono K."/>
            <person name="Kuhara S."/>
            <person name="Ogasawara N."/>
            <person name="Kikuchi H."/>
        </authorList>
    </citation>
    <scope>NUCLEOTIDE SEQUENCE [LARGE SCALE GENOMIC DNA]</scope>
    <source>
        <strain>ATCC 42149 / RIB 40</strain>
    </source>
</reference>
<comment type="function">
    <text evidence="2">Histone methyltransferase that trimethylates histone H3 'Lys-36' forming H3K36me3. Involved in transcription elongation as well as in transcription repression.</text>
</comment>
<comment type="catalytic activity">
    <reaction evidence="2 7">
        <text>L-lysyl(36)-[histone H3] + 3 S-adenosyl-L-methionine = N(6),N(6),N(6)-trimethyl-L-lysyl(36)-[histone H3] + 3 S-adenosyl-L-homocysteine + 3 H(+)</text>
        <dbReference type="Rhea" id="RHEA:60324"/>
        <dbReference type="Rhea" id="RHEA-COMP:9785"/>
        <dbReference type="Rhea" id="RHEA-COMP:15536"/>
        <dbReference type="ChEBI" id="CHEBI:15378"/>
        <dbReference type="ChEBI" id="CHEBI:29969"/>
        <dbReference type="ChEBI" id="CHEBI:57856"/>
        <dbReference type="ChEBI" id="CHEBI:59789"/>
        <dbReference type="ChEBI" id="CHEBI:61961"/>
        <dbReference type="EC" id="2.1.1.359"/>
    </reaction>
</comment>
<comment type="subcellular location">
    <subcellularLocation>
        <location evidence="1">Nucleus</location>
    </subcellularLocation>
    <subcellularLocation>
        <location evidence="1">Chromosome</location>
    </subcellularLocation>
</comment>
<comment type="domain">
    <text evidence="1">The AWS and SET domains are necessary for transcription repression.</text>
</comment>
<comment type="similarity">
    <text evidence="7">Belongs to the class V-like SAM-binding methyltransferase superfamily. Histone-lysine methyltransferase family. SET2 subfamily.</text>
</comment>
<protein>
    <recommendedName>
        <fullName>Histone-lysine N-methyltransferase, H3 lysine-36 specific</fullName>
        <ecNumber evidence="2">2.1.1.359</ecNumber>
    </recommendedName>
    <alternativeName>
        <fullName>SET domain-containing protein 2</fullName>
    </alternativeName>
</protein>
<dbReference type="EC" id="2.1.1.359" evidence="2"/>
<dbReference type="EMBL" id="BA000049">
    <property type="protein sequence ID" value="BAE55079.1"/>
    <property type="molecule type" value="Genomic_DNA"/>
</dbReference>
<dbReference type="SMR" id="Q2UTN6"/>
<dbReference type="STRING" id="510516.Q2UTN6"/>
<dbReference type="EnsemblFungi" id="BAE55079">
    <property type="protein sequence ID" value="BAE55079"/>
    <property type="gene ID" value="AO090009000660"/>
</dbReference>
<dbReference type="HOGENOM" id="CLU_008492_0_1_1"/>
<dbReference type="OMA" id="AQSQPCY"/>
<dbReference type="Proteomes" id="UP000006564">
    <property type="component" value="Chromosome 1"/>
</dbReference>
<dbReference type="GO" id="GO:0005694">
    <property type="term" value="C:chromosome"/>
    <property type="evidence" value="ECO:0007669"/>
    <property type="project" value="UniProtKB-SubCell"/>
</dbReference>
<dbReference type="GO" id="GO:0005634">
    <property type="term" value="C:nucleus"/>
    <property type="evidence" value="ECO:0007669"/>
    <property type="project" value="UniProtKB-SubCell"/>
</dbReference>
<dbReference type="GO" id="GO:0140955">
    <property type="term" value="F:histone H3K36 trimethyltransferase activity"/>
    <property type="evidence" value="ECO:0007669"/>
    <property type="project" value="UniProtKB-EC"/>
</dbReference>
<dbReference type="GO" id="GO:0032259">
    <property type="term" value="P:methylation"/>
    <property type="evidence" value="ECO:0007669"/>
    <property type="project" value="UniProtKB-KW"/>
</dbReference>
<dbReference type="GO" id="GO:0006355">
    <property type="term" value="P:regulation of DNA-templated transcription"/>
    <property type="evidence" value="ECO:0007669"/>
    <property type="project" value="InterPro"/>
</dbReference>
<dbReference type="CDD" id="cd19172">
    <property type="entry name" value="SET_SETD2"/>
    <property type="match status" value="1"/>
</dbReference>
<dbReference type="FunFam" id="1.10.1740.100:FF:000002">
    <property type="entry name" value="Histone-lysine N-methyltransferase"/>
    <property type="match status" value="1"/>
</dbReference>
<dbReference type="FunFam" id="2.170.270.10:FF:000033">
    <property type="entry name" value="Histone-lysine N-methyltransferase"/>
    <property type="match status" value="1"/>
</dbReference>
<dbReference type="Gene3D" id="2.170.270.10">
    <property type="entry name" value="SET domain"/>
    <property type="match status" value="1"/>
</dbReference>
<dbReference type="Gene3D" id="1.10.1740.100">
    <property type="entry name" value="Set2, Rpb1 interacting domain"/>
    <property type="match status" value="1"/>
</dbReference>
<dbReference type="InterPro" id="IPR006560">
    <property type="entry name" value="AWS_dom"/>
</dbReference>
<dbReference type="InterPro" id="IPR003616">
    <property type="entry name" value="Post-SET_dom"/>
</dbReference>
<dbReference type="InterPro" id="IPR025788">
    <property type="entry name" value="Set2_fungi"/>
</dbReference>
<dbReference type="InterPro" id="IPR050777">
    <property type="entry name" value="SET2_Histone-Lys_MeTrsfase"/>
</dbReference>
<dbReference type="InterPro" id="IPR001214">
    <property type="entry name" value="SET_dom"/>
</dbReference>
<dbReference type="InterPro" id="IPR046341">
    <property type="entry name" value="SET_dom_sf"/>
</dbReference>
<dbReference type="InterPro" id="IPR044437">
    <property type="entry name" value="SETD2/Set2_SET"/>
</dbReference>
<dbReference type="InterPro" id="IPR013257">
    <property type="entry name" value="SRI"/>
</dbReference>
<dbReference type="InterPro" id="IPR038190">
    <property type="entry name" value="SRI_sf"/>
</dbReference>
<dbReference type="InterPro" id="IPR035441">
    <property type="entry name" value="TFIIS/LEDGF_dom_sf"/>
</dbReference>
<dbReference type="InterPro" id="IPR017923">
    <property type="entry name" value="TFIIS_N"/>
</dbReference>
<dbReference type="InterPro" id="IPR001202">
    <property type="entry name" value="WW_dom"/>
</dbReference>
<dbReference type="InterPro" id="IPR036020">
    <property type="entry name" value="WW_dom_sf"/>
</dbReference>
<dbReference type="PANTHER" id="PTHR22884">
    <property type="entry name" value="SET DOMAIN PROTEINS"/>
    <property type="match status" value="1"/>
</dbReference>
<dbReference type="Pfam" id="PF17907">
    <property type="entry name" value="AWS"/>
    <property type="match status" value="1"/>
</dbReference>
<dbReference type="Pfam" id="PF08711">
    <property type="entry name" value="Med26"/>
    <property type="match status" value="1"/>
</dbReference>
<dbReference type="Pfam" id="PF00856">
    <property type="entry name" value="SET"/>
    <property type="match status" value="1"/>
</dbReference>
<dbReference type="Pfam" id="PF08236">
    <property type="entry name" value="SRI"/>
    <property type="match status" value="1"/>
</dbReference>
<dbReference type="SMART" id="SM00570">
    <property type="entry name" value="AWS"/>
    <property type="match status" value="1"/>
</dbReference>
<dbReference type="SMART" id="SM00508">
    <property type="entry name" value="PostSET"/>
    <property type="match status" value="1"/>
</dbReference>
<dbReference type="SMART" id="SM00317">
    <property type="entry name" value="SET"/>
    <property type="match status" value="1"/>
</dbReference>
<dbReference type="SUPFAM" id="SSF47676">
    <property type="entry name" value="Conserved domain common to transcription factors TFIIS, elongin A, CRSP70"/>
    <property type="match status" value="1"/>
</dbReference>
<dbReference type="SUPFAM" id="SSF82199">
    <property type="entry name" value="SET domain"/>
    <property type="match status" value="1"/>
</dbReference>
<dbReference type="SUPFAM" id="SSF51045">
    <property type="entry name" value="WW domain"/>
    <property type="match status" value="1"/>
</dbReference>
<dbReference type="PROSITE" id="PS51215">
    <property type="entry name" value="AWS"/>
    <property type="match status" value="1"/>
</dbReference>
<dbReference type="PROSITE" id="PS50868">
    <property type="entry name" value="POST_SET"/>
    <property type="match status" value="1"/>
</dbReference>
<dbReference type="PROSITE" id="PS51568">
    <property type="entry name" value="SAM_MT43_SET2_1"/>
    <property type="match status" value="1"/>
</dbReference>
<dbReference type="PROSITE" id="PS50280">
    <property type="entry name" value="SET"/>
    <property type="match status" value="1"/>
</dbReference>
<dbReference type="PROSITE" id="PS01159">
    <property type="entry name" value="WW_DOMAIN_1"/>
    <property type="match status" value="1"/>
</dbReference>
<dbReference type="PROSITE" id="PS50020">
    <property type="entry name" value="WW_DOMAIN_2"/>
    <property type="match status" value="1"/>
</dbReference>
<gene>
    <name type="primary">set2</name>
    <name type="ORF">AO090009000660</name>
</gene>
<name>SET2_ASPOR</name>
<sequence length="965" mass="109182">MSPHDYADRRSESVTDAVTAMNLEPDRATDTPALNGGSTSLKDDTNGVSRSPSAQNMDVAVKSRSSSQTPVKKEEETSNTADMEEKVGGDITVKQEPGQPPKLTRSSSQKVVARPPQLFSHLRDSTAEARVSFELMDSCTYANKYMGYTEHAMECDCAEEWVSSVSGNILSMPISLYALEPALSKNLACGEDSDCINRATKIECVGDCGCGPDCQNQRFQRKEYAQVAVIKTEKKGFGLRAEADLRPHQFIYEYVGEVINEGQFRRRMRQYDEEGIKHFYFMSLSKGEFVDATKRGNLGRFCNHSCNPNCYVDKWVVGEKLRMGIFAERDIQAGEELVFNYNVDRYGADPQPCYCGEPNCTGFIGGRTQTERATKLSNATIEALGIEDADGWDTAVAKRPRKKKMGEDDEEYVDSVQPKSLEENGVTKVMAALMQCQEKWIAVKLLGRIQRCDDERVRNRVVKMHGYQILNSQLTMWKDDFNVVLQILDILDKFPRLTRNKIIDSKIEVTIQPLTSCGDERVEKRAATLLQVWSTLEVGYRIPRMKRDPNATAQAVNQFERRETIRDQRRRSKSRSRSRSRSIEAPRGPAAQTRGVYGQRNPHHHGPRSFRRQFNPLPTGWFAAESNGRTYYYSARGDTTWTRPTKPAPQPPPPPKESRDKALQDIIDGIMNAKENTPKEKSGTPGTPQVSKPIPVKKEGQEKWRGYSEDKQKKVYENTLFPHIKYVVDKFKHKLPKEDLKRYAKDVAKKLVNSDFKNNRVEDPTKISEKQQKKVKKYCKEFFDKAVLKHRAYEQRKYEKQAKGMDSKVETPQAPSDDEALDVKMSDDEEDKADEKDTPMTAEETQGGTKRKREGGIAEDSNLGEYISSSKRQRSSTPPPLPPISPGDDPQNMDNAKKILRDDIDSRSENNEFTPPPPPPPPPDDEMPSESPETDHAIDQSPSRAEYITDMNKLKSSQPEIEGKV</sequence>
<accession>Q2UTN6</accession>
<evidence type="ECO:0000250" key="1"/>
<evidence type="ECO:0000250" key="2">
    <source>
        <dbReference type="UniProtKB" id="P46995"/>
    </source>
</evidence>
<evidence type="ECO:0000255" key="3">
    <source>
        <dbReference type="PROSITE-ProRule" id="PRU00155"/>
    </source>
</evidence>
<evidence type="ECO:0000255" key="4">
    <source>
        <dbReference type="PROSITE-ProRule" id="PRU00190"/>
    </source>
</evidence>
<evidence type="ECO:0000255" key="5">
    <source>
        <dbReference type="PROSITE-ProRule" id="PRU00224"/>
    </source>
</evidence>
<evidence type="ECO:0000255" key="6">
    <source>
        <dbReference type="PROSITE-ProRule" id="PRU00562"/>
    </source>
</evidence>
<evidence type="ECO:0000255" key="7">
    <source>
        <dbReference type="PROSITE-ProRule" id="PRU00901"/>
    </source>
</evidence>
<evidence type="ECO:0000256" key="8">
    <source>
        <dbReference type="SAM" id="MobiDB-lite"/>
    </source>
</evidence>
<feature type="chain" id="PRO_0000269781" description="Histone-lysine N-methyltransferase, H3 lysine-36 specific">
    <location>
        <begin position="1"/>
        <end position="965"/>
    </location>
</feature>
<feature type="domain" description="AWS" evidence="6">
    <location>
        <begin position="150"/>
        <end position="223"/>
    </location>
</feature>
<feature type="domain" description="SET" evidence="4">
    <location>
        <begin position="225"/>
        <end position="342"/>
    </location>
</feature>
<feature type="domain" description="Post-SET" evidence="3">
    <location>
        <begin position="349"/>
        <end position="365"/>
    </location>
</feature>
<feature type="domain" description="WW" evidence="5">
    <location>
        <begin position="615"/>
        <end position="646"/>
    </location>
</feature>
<feature type="region of interest" description="Disordered" evidence="8">
    <location>
        <begin position="1"/>
        <end position="112"/>
    </location>
</feature>
<feature type="region of interest" description="Disordered" evidence="8">
    <location>
        <begin position="549"/>
        <end position="615"/>
    </location>
</feature>
<feature type="region of interest" description="Disordered" evidence="8">
    <location>
        <begin position="637"/>
        <end position="660"/>
    </location>
</feature>
<feature type="region of interest" description="Disordered" evidence="8">
    <location>
        <begin position="674"/>
        <end position="706"/>
    </location>
</feature>
<feature type="region of interest" description="Disordered" evidence="8">
    <location>
        <begin position="797"/>
        <end position="965"/>
    </location>
</feature>
<feature type="compositionally biased region" description="Basic and acidic residues" evidence="8">
    <location>
        <begin position="1"/>
        <end position="13"/>
    </location>
</feature>
<feature type="compositionally biased region" description="Polar residues" evidence="8">
    <location>
        <begin position="36"/>
        <end position="56"/>
    </location>
</feature>
<feature type="compositionally biased region" description="Basic residues" evidence="8">
    <location>
        <begin position="568"/>
        <end position="580"/>
    </location>
</feature>
<feature type="compositionally biased region" description="Basic residues" evidence="8">
    <location>
        <begin position="601"/>
        <end position="611"/>
    </location>
</feature>
<feature type="compositionally biased region" description="Pro residues" evidence="8">
    <location>
        <begin position="646"/>
        <end position="655"/>
    </location>
</feature>
<feature type="compositionally biased region" description="Basic and acidic residues" evidence="8">
    <location>
        <begin position="696"/>
        <end position="706"/>
    </location>
</feature>
<feature type="compositionally biased region" description="Basic and acidic residues" evidence="8">
    <location>
        <begin position="797"/>
        <end position="809"/>
    </location>
</feature>
<feature type="compositionally biased region" description="Basic and acidic residues" evidence="8">
    <location>
        <begin position="895"/>
        <end position="910"/>
    </location>
</feature>